<protein>
    <recommendedName>
        <fullName>Leukocyte-specific transcript 1 protein</fullName>
    </recommendedName>
</protein>
<organism>
    <name type="scientific">Macaca mulatta</name>
    <name type="common">Rhesus macaque</name>
    <dbReference type="NCBI Taxonomy" id="9544"/>
    <lineage>
        <taxon>Eukaryota</taxon>
        <taxon>Metazoa</taxon>
        <taxon>Chordata</taxon>
        <taxon>Craniata</taxon>
        <taxon>Vertebrata</taxon>
        <taxon>Euteleostomi</taxon>
        <taxon>Mammalia</taxon>
        <taxon>Eutheria</taxon>
        <taxon>Euarchontoglires</taxon>
        <taxon>Primates</taxon>
        <taxon>Haplorrhini</taxon>
        <taxon>Catarrhini</taxon>
        <taxon>Cercopithecidae</taxon>
        <taxon>Cercopithecinae</taxon>
        <taxon>Macaca</taxon>
    </lineage>
</organism>
<proteinExistence type="inferred from homology"/>
<feature type="chain" id="PRO_0000084508" description="Leukocyte-specific transcript 1 protein">
    <location>
        <begin position="1"/>
        <end position="93"/>
    </location>
</feature>
<feature type="transmembrane region" description="Helical" evidence="3">
    <location>
        <begin position="14"/>
        <end position="32"/>
    </location>
</feature>
<feature type="region of interest" description="Disordered" evidence="4">
    <location>
        <begin position="57"/>
        <end position="82"/>
    </location>
</feature>
<feature type="compositionally biased region" description="Basic and acidic residues" evidence="4">
    <location>
        <begin position="66"/>
        <end position="82"/>
    </location>
</feature>
<feature type="modified residue" description="Phosphoserine" evidence="2">
    <location>
        <position position="54"/>
    </location>
</feature>
<accession>Q5TM23</accession>
<sequence>MIHVYTSTGAWGWAGSCCWLWSFCPPACIGCIEEHLLSWPQVQGSSEQEIHYASLQRLPVSSSEGPDLRDRDKRGTKEDPRADYACIAENKPT</sequence>
<keyword id="KW-0133">Cell shape</keyword>
<keyword id="KW-0333">Golgi apparatus</keyword>
<keyword id="KW-0391">Immunity</keyword>
<keyword id="KW-0472">Membrane</keyword>
<keyword id="KW-0597">Phosphoprotein</keyword>
<keyword id="KW-1185">Reference proteome</keyword>
<keyword id="KW-0812">Transmembrane</keyword>
<keyword id="KW-1133">Transmembrane helix</keyword>
<gene>
    <name type="primary">LST1</name>
</gene>
<dbReference type="EMBL" id="AB128049">
    <property type="protein sequence ID" value="BAD69722.1"/>
    <property type="molecule type" value="Genomic_DNA"/>
</dbReference>
<dbReference type="RefSeq" id="NP_001108434.1">
    <property type="nucleotide sequence ID" value="NM_001114962.1"/>
</dbReference>
<dbReference type="STRING" id="9544.ENSMMUP00000011610"/>
<dbReference type="HOGENOM" id="CLU_2460313_0_0_1"/>
<dbReference type="InParanoid" id="Q5TM23"/>
<dbReference type="Proteomes" id="UP000006718">
    <property type="component" value="Unassembled WGS sequence"/>
</dbReference>
<dbReference type="GO" id="GO:0000139">
    <property type="term" value="C:Golgi membrane"/>
    <property type="evidence" value="ECO:0007669"/>
    <property type="project" value="UniProtKB-SubCell"/>
</dbReference>
<dbReference type="GO" id="GO:0016020">
    <property type="term" value="C:membrane"/>
    <property type="evidence" value="ECO:0000318"/>
    <property type="project" value="GO_Central"/>
</dbReference>
<dbReference type="GO" id="GO:0000902">
    <property type="term" value="P:cell morphogenesis"/>
    <property type="evidence" value="ECO:0007669"/>
    <property type="project" value="InterPro"/>
</dbReference>
<dbReference type="GO" id="GO:0016358">
    <property type="term" value="P:dendrite development"/>
    <property type="evidence" value="ECO:0000318"/>
    <property type="project" value="GO_Central"/>
</dbReference>
<dbReference type="GO" id="GO:0006955">
    <property type="term" value="P:immune response"/>
    <property type="evidence" value="ECO:0007669"/>
    <property type="project" value="InterPro"/>
</dbReference>
<dbReference type="GO" id="GO:0008360">
    <property type="term" value="P:regulation of cell shape"/>
    <property type="evidence" value="ECO:0007669"/>
    <property type="project" value="UniProtKB-KW"/>
</dbReference>
<dbReference type="InterPro" id="IPR007775">
    <property type="entry name" value="Leukocyte-sp_tscrpt_1_LST1"/>
</dbReference>
<dbReference type="PANTHER" id="PTHR15452">
    <property type="entry name" value="LEUKOCYTE-SPECIFIC TRANSCRIPT 1 PROTEIN"/>
    <property type="match status" value="1"/>
</dbReference>
<dbReference type="PANTHER" id="PTHR15452:SF5">
    <property type="entry name" value="LEUKOCYTE-SPECIFIC TRANSCRIPT 1 PROTEIN"/>
    <property type="match status" value="1"/>
</dbReference>
<dbReference type="Pfam" id="PF05083">
    <property type="entry name" value="LST1"/>
    <property type="match status" value="1"/>
</dbReference>
<name>LST1_MACMU</name>
<comment type="function">
    <text evidence="1">Possible role in modulating immune responses. Has an inhibitory effect on lymphocyte proliferation. Induces morphological changes including production of filopodia and microspikes when overexpressed in a variety of cell types and may be involved in dendritic cell maturation (By similarity).</text>
</comment>
<comment type="subcellular location">
    <subcellularLocation>
        <location evidence="1">Membrane</location>
        <topology evidence="1">Single-pass membrane protein</topology>
    </subcellularLocation>
    <subcellularLocation>
        <location evidence="1">Golgi apparatus membrane</location>
        <topology evidence="1">Single-pass membrane protein</topology>
    </subcellularLocation>
    <subcellularLocation>
        <location evidence="1">Endomembrane system</location>
        <topology evidence="1">Single-pass membrane protein</topology>
    </subcellularLocation>
    <text evidence="1">Also detected in a perinuclear region corresponding to the localization of the Golgi apparatus and throughout the cytoplasm.</text>
</comment>
<comment type="similarity">
    <text evidence="5">Belongs to the LST1 family.</text>
</comment>
<reference key="1">
    <citation type="journal article" date="2004" name="Mol. Biol. Evol.">
        <title>Rhesus macaque class I duplicon structures, organization, and evolution within the alpha block of the major histocompatibility complex.</title>
        <authorList>
            <person name="Kulski J.K."/>
            <person name="Anzai T."/>
            <person name="Shiina T."/>
            <person name="Inoko H."/>
        </authorList>
    </citation>
    <scope>NUCLEOTIDE SEQUENCE [LARGE SCALE GENOMIC DNA]</scope>
</reference>
<evidence type="ECO:0000250" key="1"/>
<evidence type="ECO:0000250" key="2">
    <source>
        <dbReference type="UniProtKB" id="O00453"/>
    </source>
</evidence>
<evidence type="ECO:0000255" key="3"/>
<evidence type="ECO:0000256" key="4">
    <source>
        <dbReference type="SAM" id="MobiDB-lite"/>
    </source>
</evidence>
<evidence type="ECO:0000305" key="5"/>